<sequence length="725" mass="81676">MALLLPLLPLLVWAAGPPGPLGPPEHSEPPLPAEPPDALFAAGAEAYARGDWPAVVLQMERALRARAAIRARSVRCRLRCANATAVVPTDGLEPTLHDLLFFRGLLRRAACLRGCGPTQPSRYRLGEELEREFRKRSPYNYLQVAYFKINKVAKAVAAAHTFFVANPEHVEMKQNLEYYQMMAGVRESDFADLEARPHMTEFRLGVRFYSEEQPAAAVLHLEKALQEYFVADTECRALCEGPYDYEGYNYLEYNADLFQAMTDHYMQVLSCKQGCVTELASQPGREKPLEDFLPSHFNYLQFAYYNNGNYEKAIECAKTYLLFFPNDEVMNQNLAYYTAVLGEDLARPIEPRKEIQAYRQRSLMEKELLFFSYDVFGIPFVDPDTWTPEEVIPKRLREKQKVERETAARISEEIGNLMKEIETLVEEKAKESAEMSKFIREGGPLVYEGASVTMNSKSLNGSQRVVVDGVLSAEECRELQRLTNAAASAGDGYRGKTSPHTPSETFYGVTVLKALKLGQEGKVPLQSAHLYYNVTEKVRHMMESYFRLEVPLHFSYSHLVCRTAIDEKQEGRSDNSHEVHVDNCILNAEALVCVKEPPAYTFRDYSAILYLNGDFEGGAFYFTELDAKTQTAEVQPQCGRAVGFSSGSENPHGVKAVTKGQRCAIALWFTLDPRHSERERVQADDLVKMLFRTEEVDLLQETSAEQEPTAATSTAGLHAAGKDEL</sequence>
<dbReference type="EC" id="1.14.11.7" evidence="8"/>
<dbReference type="EMBL" id="AY463528">
    <property type="protein sequence ID" value="AAS45237.1"/>
    <property type="molecule type" value="mRNA"/>
</dbReference>
<dbReference type="RefSeq" id="NP_001001529.1">
    <property type="nucleotide sequence ID" value="NM_001001529.2"/>
</dbReference>
<dbReference type="SMR" id="Q6JHU8"/>
<dbReference type="FunCoup" id="Q6JHU8">
    <property type="interactions" value="247"/>
</dbReference>
<dbReference type="IntAct" id="Q6JHU8">
    <property type="interactions" value="1"/>
</dbReference>
<dbReference type="STRING" id="9031.ENSGALP00000007707"/>
<dbReference type="GlyCosmos" id="Q6JHU8">
    <property type="glycosylation" value="3 sites, No reported glycans"/>
</dbReference>
<dbReference type="GlyGen" id="Q6JHU8">
    <property type="glycosylation" value="5 sites"/>
</dbReference>
<dbReference type="PaxDb" id="9031-ENSGALP00000007707"/>
<dbReference type="Ensembl" id="ENSGALT00010053151.1">
    <property type="protein sequence ID" value="ENSGALP00010032021.1"/>
    <property type="gene ID" value="ENSGALG00010021847.1"/>
</dbReference>
<dbReference type="GeneID" id="414142"/>
<dbReference type="KEGG" id="gga:414142"/>
<dbReference type="CTD" id="64175"/>
<dbReference type="VEuPathDB" id="HostDB:geneid_414142"/>
<dbReference type="eggNOG" id="KOG4459">
    <property type="taxonomic scope" value="Eukaryota"/>
</dbReference>
<dbReference type="GeneTree" id="ENSGT00940000158725"/>
<dbReference type="HOGENOM" id="CLU_017820_0_0_1"/>
<dbReference type="InParanoid" id="Q6JHU8"/>
<dbReference type="OMA" id="HTPSEMF"/>
<dbReference type="OrthoDB" id="8517835at2759"/>
<dbReference type="PhylomeDB" id="Q6JHU8"/>
<dbReference type="BRENDA" id="1.14.11.7">
    <property type="organism ID" value="1306"/>
</dbReference>
<dbReference type="PRO" id="PR:Q6JHU8"/>
<dbReference type="Proteomes" id="UP000000539">
    <property type="component" value="Chromosome 21"/>
</dbReference>
<dbReference type="Bgee" id="ENSGALG00000004833">
    <property type="expression patterns" value="Expressed in liver and 12 other cell types or tissues"/>
</dbReference>
<dbReference type="GO" id="GO:0005783">
    <property type="term" value="C:endoplasmic reticulum"/>
    <property type="evidence" value="ECO:0000314"/>
    <property type="project" value="MGI"/>
</dbReference>
<dbReference type="GO" id="GO:0032991">
    <property type="term" value="C:protein-containing complex"/>
    <property type="evidence" value="ECO:0000314"/>
    <property type="project" value="UniProtKB"/>
</dbReference>
<dbReference type="GO" id="GO:0005506">
    <property type="term" value="F:iron ion binding"/>
    <property type="evidence" value="ECO:0007669"/>
    <property type="project" value="InterPro"/>
</dbReference>
<dbReference type="GO" id="GO:0031418">
    <property type="term" value="F:L-ascorbic acid binding"/>
    <property type="evidence" value="ECO:0007669"/>
    <property type="project" value="UniProtKB-KW"/>
</dbReference>
<dbReference type="GO" id="GO:0019797">
    <property type="term" value="F:procollagen-proline 3-dioxygenase activity"/>
    <property type="evidence" value="ECO:0000314"/>
    <property type="project" value="MGI"/>
</dbReference>
<dbReference type="GO" id="GO:0060348">
    <property type="term" value="P:bone development"/>
    <property type="evidence" value="ECO:0007669"/>
    <property type="project" value="Ensembl"/>
</dbReference>
<dbReference type="GO" id="GO:0061077">
    <property type="term" value="P:chaperone-mediated protein folding"/>
    <property type="evidence" value="ECO:0000314"/>
    <property type="project" value="UniProtKB"/>
</dbReference>
<dbReference type="GO" id="GO:0030199">
    <property type="term" value="P:collagen fibril organization"/>
    <property type="evidence" value="ECO:0007669"/>
    <property type="project" value="Ensembl"/>
</dbReference>
<dbReference type="GO" id="GO:0032963">
    <property type="term" value="P:collagen metabolic process"/>
    <property type="evidence" value="ECO:0000314"/>
    <property type="project" value="MGI"/>
</dbReference>
<dbReference type="GO" id="GO:0030308">
    <property type="term" value="P:negative regulation of cell growth"/>
    <property type="evidence" value="ECO:0007669"/>
    <property type="project" value="Ensembl"/>
</dbReference>
<dbReference type="GO" id="GO:1904027">
    <property type="term" value="P:negative regulation of collagen fibril organization"/>
    <property type="evidence" value="ECO:0000314"/>
    <property type="project" value="UniProtKB"/>
</dbReference>
<dbReference type="GO" id="GO:1901874">
    <property type="term" value="P:negative regulation of post-translational protein modification"/>
    <property type="evidence" value="ECO:0007669"/>
    <property type="project" value="Ensembl"/>
</dbReference>
<dbReference type="GO" id="GO:0050821">
    <property type="term" value="P:protein stabilization"/>
    <property type="evidence" value="ECO:0007669"/>
    <property type="project" value="Ensembl"/>
</dbReference>
<dbReference type="GO" id="GO:0030278">
    <property type="term" value="P:regulation of ossification"/>
    <property type="evidence" value="ECO:0007669"/>
    <property type="project" value="Ensembl"/>
</dbReference>
<dbReference type="GO" id="GO:0050708">
    <property type="term" value="P:regulation of protein secretion"/>
    <property type="evidence" value="ECO:0007669"/>
    <property type="project" value="Ensembl"/>
</dbReference>
<dbReference type="FunFam" id="2.60.120.620:FF:000003">
    <property type="entry name" value="Prolyl 3-hydroxylase 2"/>
    <property type="match status" value="1"/>
</dbReference>
<dbReference type="Gene3D" id="2.60.120.620">
    <property type="entry name" value="q2cbj1_9rhob like domain"/>
    <property type="match status" value="1"/>
</dbReference>
<dbReference type="Gene3D" id="1.25.40.10">
    <property type="entry name" value="Tetratricopeptide repeat domain"/>
    <property type="match status" value="2"/>
</dbReference>
<dbReference type="InterPro" id="IPR056585">
    <property type="entry name" value="Leprecan_dom"/>
</dbReference>
<dbReference type="InterPro" id="IPR005123">
    <property type="entry name" value="Oxoglu/Fe-dep_dioxygenase_dom"/>
</dbReference>
<dbReference type="InterPro" id="IPR039575">
    <property type="entry name" value="P3H"/>
</dbReference>
<dbReference type="InterPro" id="IPR006620">
    <property type="entry name" value="Pro_4_hyd_alph"/>
</dbReference>
<dbReference type="InterPro" id="IPR044862">
    <property type="entry name" value="Pro_4_hyd_alph_FE2OG_OXY"/>
</dbReference>
<dbReference type="InterPro" id="IPR011990">
    <property type="entry name" value="TPR-like_helical_dom_sf"/>
</dbReference>
<dbReference type="PANTHER" id="PTHR14049">
    <property type="entry name" value="LEPRECAN 1"/>
    <property type="match status" value="1"/>
</dbReference>
<dbReference type="PANTHER" id="PTHR14049:SF5">
    <property type="entry name" value="PROLYL 3-HYDROXYLASE 1"/>
    <property type="match status" value="1"/>
</dbReference>
<dbReference type="Pfam" id="PF13640">
    <property type="entry name" value="2OG-FeII_Oxy_3"/>
    <property type="match status" value="1"/>
</dbReference>
<dbReference type="Pfam" id="PF23557">
    <property type="entry name" value="TPR_leprecan"/>
    <property type="match status" value="1"/>
</dbReference>
<dbReference type="SMART" id="SM00702">
    <property type="entry name" value="P4Hc"/>
    <property type="match status" value="1"/>
</dbReference>
<dbReference type="SUPFAM" id="SSF48452">
    <property type="entry name" value="TPR-like"/>
    <property type="match status" value="1"/>
</dbReference>
<dbReference type="PROSITE" id="PS00014">
    <property type="entry name" value="ER_TARGET"/>
    <property type="match status" value="1"/>
</dbReference>
<dbReference type="PROSITE" id="PS51471">
    <property type="entry name" value="FE2OG_OXY"/>
    <property type="match status" value="1"/>
</dbReference>
<evidence type="ECO:0000250" key="1"/>
<evidence type="ECO:0000250" key="2">
    <source>
        <dbReference type="UniProtKB" id="Q32P28"/>
    </source>
</evidence>
<evidence type="ECO:0000250" key="3">
    <source>
        <dbReference type="UniProtKB" id="Q9R1J8"/>
    </source>
</evidence>
<evidence type="ECO:0000255" key="4"/>
<evidence type="ECO:0000255" key="5">
    <source>
        <dbReference type="PROSITE-ProRule" id="PRU00805"/>
    </source>
</evidence>
<evidence type="ECO:0000255" key="6">
    <source>
        <dbReference type="PROSITE-ProRule" id="PRU10138"/>
    </source>
</evidence>
<evidence type="ECO:0000256" key="7">
    <source>
        <dbReference type="SAM" id="MobiDB-lite"/>
    </source>
</evidence>
<evidence type="ECO:0000269" key="8">
    <source>
    </source>
</evidence>
<evidence type="ECO:0000305" key="9"/>
<evidence type="ECO:0000305" key="10">
    <source>
    </source>
</evidence>
<name>P3H1_CHICK</name>
<organism>
    <name type="scientific">Gallus gallus</name>
    <name type="common">Chicken</name>
    <dbReference type="NCBI Taxonomy" id="9031"/>
    <lineage>
        <taxon>Eukaryota</taxon>
        <taxon>Metazoa</taxon>
        <taxon>Chordata</taxon>
        <taxon>Craniata</taxon>
        <taxon>Vertebrata</taxon>
        <taxon>Euteleostomi</taxon>
        <taxon>Archelosauria</taxon>
        <taxon>Archosauria</taxon>
        <taxon>Dinosauria</taxon>
        <taxon>Saurischia</taxon>
        <taxon>Theropoda</taxon>
        <taxon>Coelurosauria</taxon>
        <taxon>Aves</taxon>
        <taxon>Neognathae</taxon>
        <taxon>Galloanserae</taxon>
        <taxon>Galliformes</taxon>
        <taxon>Phasianidae</taxon>
        <taxon>Phasianinae</taxon>
        <taxon>Gallus</taxon>
    </lineage>
</organism>
<gene>
    <name evidence="2" type="primary">P3H1</name>
    <name evidence="3" type="synonym">LEPRE1</name>
</gene>
<reference key="1">
    <citation type="journal article" date="2004" name="J. Biol. Chem.">
        <title>Prolyl 3-hydroxylase 1, enzyme characterization and identification of a novel family of enzymes.</title>
        <authorList>
            <person name="Vranka J.A."/>
            <person name="Sakai L.Y."/>
            <person name="Bachinger H.P."/>
        </authorList>
    </citation>
    <scope>NUCLEOTIDE SEQUENCE [MRNA]</scope>
    <scope>PARTIAL PROTEIN SEQUENCE</scope>
    <scope>COMPONENT OF A UNFOLDED COLLAGEN-BINDING COMPLEX INCLUDING P3H1; CYPB AND CRTAP</scope>
    <scope>CHARACTERIZATION</scope>
    <scope>TISSUE SPECIFICITY</scope>
    <scope>CATALYTIC ACTIVITY</scope>
    <scope>FUNCTION</scope>
    <source>
        <tissue>Embryonic fibroblast</tissue>
    </source>
</reference>
<comment type="function">
    <text evidence="8">Has prolyl 3-hydroxylase activity catalyzing the post-translational formation of 3-hydroxyproline in -Xaa-Pro-Gly-sequences in collagens, especially types IV and V. May be involved in the secretoty pathway of cells. Has growth suppressive activity in fibroblasts.</text>
</comment>
<comment type="catalytic activity">
    <reaction evidence="8">
        <text>L-prolyl-[collagen] + 2-oxoglutarate + O2 = trans-3-hydroxy-L-prolyl-[collagen] + succinate + CO2</text>
        <dbReference type="Rhea" id="RHEA:22872"/>
        <dbReference type="Rhea" id="RHEA-COMP:11676"/>
        <dbReference type="Rhea" id="RHEA-COMP:11678"/>
        <dbReference type="ChEBI" id="CHEBI:15379"/>
        <dbReference type="ChEBI" id="CHEBI:16526"/>
        <dbReference type="ChEBI" id="CHEBI:16810"/>
        <dbReference type="ChEBI" id="CHEBI:30031"/>
        <dbReference type="ChEBI" id="CHEBI:50342"/>
        <dbReference type="ChEBI" id="CHEBI:85428"/>
        <dbReference type="EC" id="1.14.11.7"/>
    </reaction>
    <physiologicalReaction direction="left-to-right" evidence="10">
        <dbReference type="Rhea" id="RHEA:22873"/>
    </physiologicalReaction>
</comment>
<comment type="cofactor">
    <cofactor evidence="1">
        <name>Fe cation</name>
        <dbReference type="ChEBI" id="CHEBI:24875"/>
    </cofactor>
</comment>
<comment type="cofactor">
    <cofactor evidence="1">
        <name>L-ascorbate</name>
        <dbReference type="ChEBI" id="CHEBI:38290"/>
    </cofactor>
</comment>
<comment type="subunit">
    <text evidence="8">Binds unfolded collagen in a complex with CYPB and CRTAP.</text>
</comment>
<comment type="interaction">
    <interactant intactId="EBI-1169258">
        <id>Q6JHU8</id>
    </interactant>
    <interactant intactId="EBI-1169253">
        <id>Q90830</id>
        <label>CRTAP</label>
    </interactant>
    <organismsDiffer>false</organismsDiffer>
    <experiments>3</experiments>
</comment>
<comment type="subcellular location">
    <subcellularLocation>
        <location evidence="6">Endoplasmic reticulum</location>
    </subcellularLocation>
</comment>
<comment type="tissue specificity">
    <text evidence="8">Expressed in embryonic dermis, tendon, cartilage, liver and kidney. Expression in the kidney is restricted to the calyx. In the liver, expression is restricted to the interlobular septum.</text>
</comment>
<comment type="similarity">
    <text evidence="9">Belongs to the leprecan family.</text>
</comment>
<feature type="signal peptide" evidence="4">
    <location>
        <begin position="1"/>
        <end position="14"/>
    </location>
</feature>
<feature type="chain" id="PRO_0000240355" description="Prolyl 3-hydroxylase 1">
    <location>
        <begin position="15"/>
        <end position="725"/>
    </location>
</feature>
<feature type="repeat" description="TPR 1">
    <location>
        <begin position="36"/>
        <end position="69"/>
    </location>
</feature>
<feature type="repeat" description="TPR 2">
    <location>
        <begin position="136"/>
        <end position="169"/>
    </location>
</feature>
<feature type="repeat" description="TPR 3">
    <location>
        <begin position="198"/>
        <end position="231"/>
    </location>
</feature>
<feature type="repeat" description="TPR 4">
    <location>
        <begin position="294"/>
        <end position="327"/>
    </location>
</feature>
<feature type="domain" description="Fe2OG dioxygenase" evidence="5">
    <location>
        <begin position="557"/>
        <end position="671"/>
    </location>
</feature>
<feature type="region of interest" description="Disordered" evidence="7">
    <location>
        <begin position="701"/>
        <end position="725"/>
    </location>
</feature>
<feature type="coiled-coil region" evidence="4">
    <location>
        <begin position="394"/>
        <end position="441"/>
    </location>
</feature>
<feature type="short sequence motif" description="Prevents secretion from ER" evidence="6">
    <location>
        <begin position="722"/>
        <end position="725"/>
    </location>
</feature>
<feature type="compositionally biased region" description="Polar residues" evidence="7">
    <location>
        <begin position="701"/>
        <end position="715"/>
    </location>
</feature>
<feature type="active site" evidence="1">
    <location>
        <position position="662"/>
    </location>
</feature>
<feature type="binding site">
    <location>
        <position position="580"/>
    </location>
    <ligand>
        <name>Fe cation</name>
        <dbReference type="ChEBI" id="CHEBI:24875"/>
    </ligand>
</feature>
<feature type="binding site">
    <location>
        <position position="582"/>
    </location>
    <ligand>
        <name>Fe cation</name>
        <dbReference type="ChEBI" id="CHEBI:24875"/>
    </ligand>
</feature>
<feature type="binding site">
    <location>
        <position position="652"/>
    </location>
    <ligand>
        <name>Fe cation</name>
        <dbReference type="ChEBI" id="CHEBI:24875"/>
    </ligand>
</feature>
<feature type="glycosylation site" description="N-linked (GlcNAc...) asparagine" evidence="4">
    <location>
        <position position="82"/>
    </location>
</feature>
<feature type="glycosylation site" description="N-linked (GlcNAc...) asparagine" evidence="4">
    <location>
        <position position="460"/>
    </location>
</feature>
<feature type="glycosylation site" description="N-linked (GlcNAc...) asparagine" evidence="4">
    <location>
        <position position="533"/>
    </location>
</feature>
<keyword id="KW-0175">Coiled coil</keyword>
<keyword id="KW-0223">Dioxygenase</keyword>
<keyword id="KW-0903">Direct protein sequencing</keyword>
<keyword id="KW-0256">Endoplasmic reticulum</keyword>
<keyword id="KW-0325">Glycoprotein</keyword>
<keyword id="KW-0408">Iron</keyword>
<keyword id="KW-0479">Metal-binding</keyword>
<keyword id="KW-0560">Oxidoreductase</keyword>
<keyword id="KW-1185">Reference proteome</keyword>
<keyword id="KW-0677">Repeat</keyword>
<keyword id="KW-0732">Signal</keyword>
<keyword id="KW-0802">TPR repeat</keyword>
<keyword id="KW-0847">Vitamin C</keyword>
<proteinExistence type="evidence at protein level"/>
<protein>
    <recommendedName>
        <fullName evidence="2">Prolyl 3-hydroxylase 1</fullName>
        <ecNumber evidence="8">1.14.11.7</ecNumber>
    </recommendedName>
    <alternativeName>
        <fullName evidence="3">Leucine- and proline-enriched proteoglycan 1 homolog</fullName>
        <shortName evidence="3">Leprecan-1 homolog</shortName>
    </alternativeName>
</protein>
<accession>Q6JHU8</accession>